<organism>
    <name type="scientific">Hypocrea jecorina (strain ATCC 56765 / BCRC 32924 / NRRL 11460 / Rut C-30)</name>
    <name type="common">Trichoderma reesei</name>
    <dbReference type="NCBI Taxonomy" id="1344414"/>
    <lineage>
        <taxon>Eukaryota</taxon>
        <taxon>Fungi</taxon>
        <taxon>Dikarya</taxon>
        <taxon>Ascomycota</taxon>
        <taxon>Pezizomycotina</taxon>
        <taxon>Sordariomycetes</taxon>
        <taxon>Hypocreomycetidae</taxon>
        <taxon>Hypocreales</taxon>
        <taxon>Hypocreaceae</taxon>
        <taxon>Trichoderma</taxon>
    </lineage>
</organism>
<keyword id="KW-0119">Carbohydrate metabolism</keyword>
<keyword id="KW-0136">Cellulose degradation</keyword>
<keyword id="KW-1015">Disulfide bond</keyword>
<keyword id="KW-0325">Glycoprotein</keyword>
<keyword id="KW-0326">Glycosidase</keyword>
<keyword id="KW-0378">Hydrolase</keyword>
<keyword id="KW-0624">Polysaccharide degradation</keyword>
<keyword id="KW-0873">Pyrrolidone carboxylic acid</keyword>
<keyword id="KW-0964">Secreted</keyword>
<keyword id="KW-0732">Signal</keyword>
<proteinExistence type="evidence at protein level"/>
<feature type="signal peptide" evidence="2">
    <location>
        <begin position="1"/>
        <end position="18"/>
    </location>
</feature>
<feature type="propeptide" id="PRO_0000441279" evidence="1">
    <location>
        <begin position="19"/>
        <end position="24"/>
    </location>
</feature>
<feature type="chain" id="PRO_5005101780" description="Exoglucanase 2">
    <location>
        <begin position="25"/>
        <end position="471"/>
    </location>
</feature>
<feature type="domain" description="CBM1" evidence="3">
    <location>
        <begin position="26"/>
        <end position="62"/>
    </location>
</feature>
<feature type="region of interest" description="Disordered" evidence="4">
    <location>
        <begin position="64"/>
        <end position="108"/>
    </location>
</feature>
<feature type="region of interest" description="Linker" evidence="1">
    <location>
        <begin position="66"/>
        <end position="106"/>
    </location>
</feature>
<feature type="region of interest" description="Catalytic" evidence="1">
    <location>
        <begin position="107"/>
        <end position="471"/>
    </location>
</feature>
<feature type="compositionally biased region" description="Low complexity" evidence="4">
    <location>
        <begin position="64"/>
        <end position="101"/>
    </location>
</feature>
<feature type="active site" description="Proton donor" evidence="1">
    <location>
        <position position="245"/>
    </location>
</feature>
<feature type="site" description="Not glycosylated" evidence="5">
    <location>
        <position position="38"/>
    </location>
</feature>
<feature type="site" description="Transition state stabilizer that also modulates the pKa of Asp-245 and may act as a proton acceptor through a water chain" evidence="1">
    <location>
        <position position="199"/>
    </location>
</feature>
<feature type="modified residue" description="Pyrrolidone carboxylic acid" evidence="1">
    <location>
        <position position="25"/>
    </location>
</feature>
<feature type="glycosylation site" description="O-linked (Man...) threonine" evidence="1">
    <location>
        <position position="111"/>
    </location>
</feature>
<feature type="glycosylation site" description="O-linked (Man...) threonine" evidence="1">
    <location>
        <position position="121"/>
    </location>
</feature>
<feature type="glycosylation site" description="O-linked (Man...) serine" evidence="1">
    <location>
        <position position="130"/>
    </location>
</feature>
<feature type="glycosylation site" description="O-linked (Man...) serine" evidence="1">
    <location>
        <position position="133"/>
    </location>
</feature>
<feature type="glycosylation site" description="O-linked (Man...) serine" evidence="1">
    <location>
        <position position="134"/>
    </location>
</feature>
<feature type="glycosylation site" description="O-linked (Man...) serine" evidence="1">
    <location>
        <position position="139"/>
    </location>
</feature>
<feature type="glycosylation site" description="O-linked (Man...) threonine" evidence="1">
    <location>
        <position position="146"/>
    </location>
</feature>
<feature type="glycosylation site" description="N-linked (GlcNAc) asparagine" evidence="5">
    <location>
        <position position="313"/>
    </location>
</feature>
<feature type="glycosylation site" description="N-linked (GlcNAc...) (high mannose) asparagine" evidence="5">
    <location>
        <position position="334"/>
    </location>
</feature>
<feature type="disulfide bond" evidence="1">
    <location>
        <begin position="200"/>
        <end position="259"/>
    </location>
</feature>
<feature type="disulfide bond" evidence="1">
    <location>
        <begin position="392"/>
        <end position="439"/>
    </location>
</feature>
<accession>A0A024SH76</accession>
<name>GUX2_HYPJR</name>
<sequence>MIVGILTTLATLATLAASVPLEERQACSSVWGQCGGQNWSGPTCCASGSTCVYSNDYYSQCLPGAASSSSSTRAASTTSRVSPTTSRSSSATPPPGSTTTRVPPVGSGTATYSGNPFVGVTPWANAYYASEVSSLAIPSLTGAMATAAAAVAKVPSFMWLDTLDKTPLMEQTLADIRTANKNGGNYAGQFVVYDLPDRDCAALASNGEYSIADGGVAKYKNYIDTIRQIVVEYSDIRTLLVIEPDSLANLVTNLGTPKCANAQSAYLECINYAVTQLNLPNVAMYLDAGHAGWLGWPANQDPAAQLFANVYKNASSPRALRGLATNVANYNGWNITSPPSYTQGNAVYNEKLYIHAIGPLLANHGWSNAFFITDQGRSGKQPTGQQQWGDWCNVIGTGFGIRPSANTGDSLLDSFVWVKPGGECDGTSDSSAPRFDSHCALPDALQPAPQAGAWFQAYFVQLLTNANPSFL</sequence>
<evidence type="ECO:0000250" key="1">
    <source>
        <dbReference type="UniProtKB" id="P07987"/>
    </source>
</evidence>
<evidence type="ECO:0000255" key="2"/>
<evidence type="ECO:0000255" key="3">
    <source>
        <dbReference type="PROSITE-ProRule" id="PRU00597"/>
    </source>
</evidence>
<evidence type="ECO:0000256" key="4">
    <source>
        <dbReference type="SAM" id="MobiDB-lite"/>
    </source>
</evidence>
<evidence type="ECO:0000269" key="5">
    <source>
    </source>
</evidence>
<evidence type="ECO:0000305" key="6"/>
<reference key="1">
    <citation type="journal article" date="2013" name="Ind. Biotechnol.">
        <title>Comparative genomics analysis of Trichoderma reesei strains.</title>
        <authorList>
            <person name="Koike H."/>
            <person name="Aerts A."/>
            <person name="LaButti K."/>
            <person name="Grigoriev I.V."/>
            <person name="Baker S.E."/>
        </authorList>
    </citation>
    <scope>NUCLEOTIDE SEQUENCE [LARGE SCALE GENOMIC DNA]</scope>
    <source>
        <strain>ATCC 56765 / BCRC 32924 / NRRL 11460 / Rut C-30</strain>
    </source>
</reference>
<reference key="2">
    <citation type="journal article" date="2002" name="Glycobiology">
        <title>Identification of glycan structure and glycosylation sites in cellobiohydrolase II and endoglucanases I and II from Trichoderma reesei.</title>
        <authorList>
            <person name="Hui J.P."/>
            <person name="White T.C."/>
            <person name="Thibault P."/>
        </authorList>
    </citation>
    <scope>GLYCOSYLATION AT ASN-313 AND ASN-334</scope>
    <source>
        <strain>ATCC 56765 / BCRC 32924 / NRRL 11460 / Rut C-30</strain>
    </source>
</reference>
<comment type="function">
    <text evidence="1">Exocellobiohydrolases (CBH) that catalyzes the hydrolysis of 1,4-beta-D-glucosidic bonds in cellulose to release the disaccharide cellobiose. The degradation of cellulose involves an interplay between different cellulolytic enzymes. Hydrolysis starts with endoglucanases (EGs), which cut internal beta-1,4-glucosidic bonds in cellulose to reduce the polymerization degree of the substrate and create new chain ends for exocellobiohydrolases (CBHs). The CBHs release the disaccharide cellobiose from the non-reducing end of the cellulose polymer chain. Finally, beta-1,4-glucosidases hydrolyze the cellobiose and other short cello-oligosaccharides into glucose units.</text>
</comment>
<comment type="catalytic activity">
    <reaction evidence="1">
        <text>Hydrolysis of (1-&gt;4)-beta-D-glucosidic linkages in cellulose and cellotetraose, releasing cellobiose from the non-reducing ends of the chains.</text>
        <dbReference type="EC" id="3.2.1.91"/>
    </reaction>
</comment>
<comment type="subcellular location">
    <subcellularLocation>
        <location evidence="1">Secreted</location>
    </subcellularLocation>
</comment>
<comment type="domain">
    <text evidence="1">The enzyme consists of two functional domains, a catalytic core joined to a carbohydrate-binding domain (CBM) by a serine-, threonine-, and proline-rich, highly glycosylated linker sequence.</text>
</comment>
<comment type="PTM">
    <text evidence="5">Asn-334 contains mainly a high-mannose-type glycan (Hex(7-9)GlcNAc(2)) in a 3:1 ration with a single GlcNAc. Asn-313 was primarily unglycosylated with a small fraction (18%) bearing a single GlcNAc at this site.</text>
</comment>
<comment type="similarity">
    <text evidence="6">Belongs to the glycosyl hydrolase 6 (cellulase B) family.</text>
</comment>
<dbReference type="EC" id="3.2.1.91" evidence="1"/>
<dbReference type="EMBL" id="KI911141">
    <property type="protein sequence ID" value="ETS04894.1"/>
    <property type="molecule type" value="Genomic_DNA"/>
</dbReference>
<dbReference type="SMR" id="A0A024SH76"/>
<dbReference type="GlyCosmos" id="A0A024SH76">
    <property type="glycosylation" value="9 sites, No reported glycans"/>
</dbReference>
<dbReference type="iPTMnet" id="A0A024SH76"/>
<dbReference type="KEGG" id="trr:M419DRAFT_122470"/>
<dbReference type="HOGENOM" id="CLU_015488_0_0_1"/>
<dbReference type="OrthoDB" id="12398at5129"/>
<dbReference type="Proteomes" id="UP000024376">
    <property type="component" value="Unassembled WGS sequence"/>
</dbReference>
<dbReference type="GO" id="GO:0005576">
    <property type="term" value="C:extracellular region"/>
    <property type="evidence" value="ECO:0007669"/>
    <property type="project" value="UniProtKB-SubCell"/>
</dbReference>
<dbReference type="GO" id="GO:0016162">
    <property type="term" value="F:cellulose 1,4-beta-cellobiosidase activity"/>
    <property type="evidence" value="ECO:0007669"/>
    <property type="project" value="UniProtKB-EC"/>
</dbReference>
<dbReference type="GO" id="GO:0030248">
    <property type="term" value="F:cellulose binding"/>
    <property type="evidence" value="ECO:0007669"/>
    <property type="project" value="InterPro"/>
</dbReference>
<dbReference type="GO" id="GO:0030245">
    <property type="term" value="P:cellulose catabolic process"/>
    <property type="evidence" value="ECO:0007669"/>
    <property type="project" value="UniProtKB-KW"/>
</dbReference>
<dbReference type="FunFam" id="3.20.20.40:FF:000001">
    <property type="entry name" value="Glucanase"/>
    <property type="match status" value="1"/>
</dbReference>
<dbReference type="Gene3D" id="3.20.20.40">
    <property type="entry name" value="1, 4-beta cellobiohydrolase"/>
    <property type="match status" value="1"/>
</dbReference>
<dbReference type="InterPro" id="IPR016288">
    <property type="entry name" value="Beta_cellobiohydrolase"/>
</dbReference>
<dbReference type="InterPro" id="IPR036434">
    <property type="entry name" value="Beta_cellobiohydrolase_sf"/>
</dbReference>
<dbReference type="InterPro" id="IPR035971">
    <property type="entry name" value="CBD_sf"/>
</dbReference>
<dbReference type="InterPro" id="IPR000254">
    <property type="entry name" value="Cellulose-bd_dom_fun"/>
</dbReference>
<dbReference type="InterPro" id="IPR001524">
    <property type="entry name" value="Glyco_hydro_6_CS"/>
</dbReference>
<dbReference type="PANTHER" id="PTHR34876">
    <property type="match status" value="1"/>
</dbReference>
<dbReference type="PANTHER" id="PTHR34876:SF4">
    <property type="entry name" value="1,4-BETA-D-GLUCAN CELLOBIOHYDROLASE C-RELATED"/>
    <property type="match status" value="1"/>
</dbReference>
<dbReference type="Pfam" id="PF00734">
    <property type="entry name" value="CBM_1"/>
    <property type="match status" value="1"/>
</dbReference>
<dbReference type="Pfam" id="PF01341">
    <property type="entry name" value="Glyco_hydro_6"/>
    <property type="match status" value="1"/>
</dbReference>
<dbReference type="PIRSF" id="PIRSF001100">
    <property type="entry name" value="Beta_cellobiohydrolase"/>
    <property type="match status" value="1"/>
</dbReference>
<dbReference type="PRINTS" id="PR00733">
    <property type="entry name" value="GLHYDRLASE6"/>
</dbReference>
<dbReference type="SMART" id="SM00236">
    <property type="entry name" value="fCBD"/>
    <property type="match status" value="1"/>
</dbReference>
<dbReference type="SUPFAM" id="SSF57180">
    <property type="entry name" value="Cellulose-binding domain"/>
    <property type="match status" value="1"/>
</dbReference>
<dbReference type="SUPFAM" id="SSF51989">
    <property type="entry name" value="Glycosyl hydrolases family 6, cellulases"/>
    <property type="match status" value="1"/>
</dbReference>
<dbReference type="PROSITE" id="PS00562">
    <property type="entry name" value="CBM1_1"/>
    <property type="match status" value="1"/>
</dbReference>
<dbReference type="PROSITE" id="PS51164">
    <property type="entry name" value="CBM1_2"/>
    <property type="match status" value="1"/>
</dbReference>
<dbReference type="PROSITE" id="PS00655">
    <property type="entry name" value="GLYCOSYL_HYDROL_F6_1"/>
    <property type="match status" value="1"/>
</dbReference>
<dbReference type="PROSITE" id="PS00656">
    <property type="entry name" value="GLYCOSYL_HYDROL_F6_2"/>
    <property type="match status" value="1"/>
</dbReference>
<protein>
    <recommendedName>
        <fullName>Exoglucanase 2</fullName>
        <ecNumber evidence="1">3.2.1.91</ecNumber>
    </recommendedName>
    <alternativeName>
        <fullName>1,4-beta-cellobiohydrolase</fullName>
    </alternativeName>
    <alternativeName>
        <fullName>Cellobiohydrolase 6A</fullName>
        <shortName>Cel6A</shortName>
    </alternativeName>
    <alternativeName>
        <fullName>Exocellobiohydrolase II</fullName>
        <shortName>CBHII</shortName>
    </alternativeName>
    <alternativeName>
        <fullName>Exoglucanase II</fullName>
    </alternativeName>
</protein>
<gene>
    <name type="primary">cbh2</name>
    <name type="ORF">M419DRAFT_122470</name>
</gene>